<reference key="1">
    <citation type="journal article" date="2006" name="BMC Genomics">
        <title>Comparative genome analysis: selection pressure on the Borrelia vls cassettes is essential for infectivity.</title>
        <authorList>
            <person name="Gloeckner G."/>
            <person name="Schulte-Spechtel U."/>
            <person name="Schilhabel M."/>
            <person name="Felder M."/>
            <person name="Suehnel J."/>
            <person name="Wilske B."/>
            <person name="Platzer M."/>
        </authorList>
    </citation>
    <scope>NUCLEOTIDE SEQUENCE [LARGE SCALE GENOMIC DNA]</scope>
    <source>
        <strain>PKo</strain>
    </source>
</reference>
<reference key="2">
    <citation type="journal article" date="2011" name="J. Bacteriol.">
        <title>Whole-genome sequences of two Borrelia afzelii and two Borrelia garinii Lyme disease agent isolates.</title>
        <authorList>
            <person name="Casjens S.R."/>
            <person name="Mongodin E.F."/>
            <person name="Qiu W.G."/>
            <person name="Dunn J.J."/>
            <person name="Luft B.J."/>
            <person name="Fraser-Liggett C.M."/>
            <person name="Schutzer S.E."/>
        </authorList>
    </citation>
    <scope>NUCLEOTIDE SEQUENCE [LARGE SCALE GENOMIC DNA]</scope>
    <source>
        <strain>PKo</strain>
    </source>
</reference>
<keyword id="KW-0678">Repressor</keyword>
<keyword id="KW-0687">Ribonucleoprotein</keyword>
<keyword id="KW-0689">Ribosomal protein</keyword>
<keyword id="KW-0694">RNA-binding</keyword>
<keyword id="KW-0699">rRNA-binding</keyword>
<keyword id="KW-0810">Translation regulation</keyword>
<keyword id="KW-0820">tRNA-binding</keyword>
<dbReference type="EMBL" id="CP000395">
    <property type="protein sequence ID" value="ABH01663.1"/>
    <property type="molecule type" value="Genomic_DNA"/>
</dbReference>
<dbReference type="EMBL" id="CP002933">
    <property type="protein sequence ID" value="AEL69620.1"/>
    <property type="molecule type" value="Genomic_DNA"/>
</dbReference>
<dbReference type="RefSeq" id="WP_004790164.1">
    <property type="nucleotide sequence ID" value="NZ_CP160066.1"/>
</dbReference>
<dbReference type="SMR" id="Q0SNB5"/>
<dbReference type="STRING" id="29518.BLA32_02345"/>
<dbReference type="GeneID" id="77265230"/>
<dbReference type="KEGG" id="baf:BAPKO_0407"/>
<dbReference type="KEGG" id="bafz:BafPKo_0394"/>
<dbReference type="PATRIC" id="fig|390236.22.peg.387"/>
<dbReference type="eggNOG" id="COG0081">
    <property type="taxonomic scope" value="Bacteria"/>
</dbReference>
<dbReference type="HOGENOM" id="CLU_062853_0_0_12"/>
<dbReference type="OrthoDB" id="9803740at2"/>
<dbReference type="Proteomes" id="UP000005216">
    <property type="component" value="Chromosome"/>
</dbReference>
<dbReference type="GO" id="GO:0015934">
    <property type="term" value="C:large ribosomal subunit"/>
    <property type="evidence" value="ECO:0007669"/>
    <property type="project" value="InterPro"/>
</dbReference>
<dbReference type="GO" id="GO:0019843">
    <property type="term" value="F:rRNA binding"/>
    <property type="evidence" value="ECO:0007669"/>
    <property type="project" value="UniProtKB-UniRule"/>
</dbReference>
<dbReference type="GO" id="GO:0003735">
    <property type="term" value="F:structural constituent of ribosome"/>
    <property type="evidence" value="ECO:0007669"/>
    <property type="project" value="InterPro"/>
</dbReference>
<dbReference type="GO" id="GO:0000049">
    <property type="term" value="F:tRNA binding"/>
    <property type="evidence" value="ECO:0007669"/>
    <property type="project" value="UniProtKB-KW"/>
</dbReference>
<dbReference type="GO" id="GO:0006417">
    <property type="term" value="P:regulation of translation"/>
    <property type="evidence" value="ECO:0007669"/>
    <property type="project" value="UniProtKB-KW"/>
</dbReference>
<dbReference type="GO" id="GO:0006412">
    <property type="term" value="P:translation"/>
    <property type="evidence" value="ECO:0007669"/>
    <property type="project" value="UniProtKB-UniRule"/>
</dbReference>
<dbReference type="CDD" id="cd00403">
    <property type="entry name" value="Ribosomal_L1"/>
    <property type="match status" value="1"/>
</dbReference>
<dbReference type="FunFam" id="3.40.50.790:FF:000001">
    <property type="entry name" value="50S ribosomal protein L1"/>
    <property type="match status" value="1"/>
</dbReference>
<dbReference type="Gene3D" id="3.30.190.20">
    <property type="match status" value="1"/>
</dbReference>
<dbReference type="Gene3D" id="3.40.50.790">
    <property type="match status" value="1"/>
</dbReference>
<dbReference type="HAMAP" id="MF_01318_B">
    <property type="entry name" value="Ribosomal_uL1_B"/>
    <property type="match status" value="1"/>
</dbReference>
<dbReference type="InterPro" id="IPR005878">
    <property type="entry name" value="Ribosom_uL1_bac-type"/>
</dbReference>
<dbReference type="InterPro" id="IPR002143">
    <property type="entry name" value="Ribosomal_uL1"/>
</dbReference>
<dbReference type="InterPro" id="IPR023674">
    <property type="entry name" value="Ribosomal_uL1-like"/>
</dbReference>
<dbReference type="InterPro" id="IPR028364">
    <property type="entry name" value="Ribosomal_uL1/biogenesis"/>
</dbReference>
<dbReference type="InterPro" id="IPR016095">
    <property type="entry name" value="Ribosomal_uL1_3-a/b-sand"/>
</dbReference>
<dbReference type="InterPro" id="IPR023673">
    <property type="entry name" value="Ribosomal_uL1_CS"/>
</dbReference>
<dbReference type="NCBIfam" id="TIGR01169">
    <property type="entry name" value="rplA_bact"/>
    <property type="match status" value="1"/>
</dbReference>
<dbReference type="PANTHER" id="PTHR36427">
    <property type="entry name" value="54S RIBOSOMAL PROTEIN L1, MITOCHONDRIAL"/>
    <property type="match status" value="1"/>
</dbReference>
<dbReference type="PANTHER" id="PTHR36427:SF3">
    <property type="entry name" value="LARGE RIBOSOMAL SUBUNIT PROTEIN UL1M"/>
    <property type="match status" value="1"/>
</dbReference>
<dbReference type="Pfam" id="PF00687">
    <property type="entry name" value="Ribosomal_L1"/>
    <property type="match status" value="1"/>
</dbReference>
<dbReference type="PIRSF" id="PIRSF002155">
    <property type="entry name" value="Ribosomal_L1"/>
    <property type="match status" value="1"/>
</dbReference>
<dbReference type="SUPFAM" id="SSF56808">
    <property type="entry name" value="Ribosomal protein L1"/>
    <property type="match status" value="1"/>
</dbReference>
<dbReference type="PROSITE" id="PS01199">
    <property type="entry name" value="RIBOSOMAL_L1"/>
    <property type="match status" value="1"/>
</dbReference>
<proteinExistence type="inferred from homology"/>
<name>RL1_BORAP</name>
<sequence>MSKKGKKYIEAFSKVDKSKFYSIEDAISLLKEIKFVKFDETIDISVNLNLKKNHTVRDTIVLPNQFMKPKRILVFAKGDRADEARAFGATYVGDDDLINKIKSGWDEFDIVVATPDMMKDVGRLGPILGKRGLMPNPKTQTVTNNLKDAINSLKKGRTEFRANKNGVISFSFGKSSMDNEKIKENYEEFIKEVVKKRPSDLKGTFIDSIYISSTMGPSIRVEFVWR</sequence>
<accession>Q0SNB5</accession>
<accession>G0IS39</accession>
<comment type="function">
    <text evidence="1">Binds directly to 23S rRNA. The L1 stalk is quite mobile in the ribosome, and is involved in E site tRNA release.</text>
</comment>
<comment type="function">
    <text evidence="1">Protein L1 is also a translational repressor protein, it controls the translation of the L11 operon by binding to its mRNA.</text>
</comment>
<comment type="subunit">
    <text evidence="1">Part of the 50S ribosomal subunit.</text>
</comment>
<comment type="similarity">
    <text evidence="1">Belongs to the universal ribosomal protein uL1 family.</text>
</comment>
<evidence type="ECO:0000255" key="1">
    <source>
        <dbReference type="HAMAP-Rule" id="MF_01318"/>
    </source>
</evidence>
<evidence type="ECO:0000305" key="2"/>
<protein>
    <recommendedName>
        <fullName evidence="1">Large ribosomal subunit protein uL1</fullName>
    </recommendedName>
    <alternativeName>
        <fullName evidence="2">50S ribosomal protein L1</fullName>
    </alternativeName>
</protein>
<gene>
    <name evidence="1" type="primary">rplA</name>
    <name type="ordered locus">BAPKO_0407</name>
    <name type="ordered locus">BafPKo_0394</name>
</gene>
<organism>
    <name type="scientific">Borreliella afzelii (strain PKo)</name>
    <name type="common">Borrelia afzelii</name>
    <dbReference type="NCBI Taxonomy" id="390236"/>
    <lineage>
        <taxon>Bacteria</taxon>
        <taxon>Pseudomonadati</taxon>
        <taxon>Spirochaetota</taxon>
        <taxon>Spirochaetia</taxon>
        <taxon>Spirochaetales</taxon>
        <taxon>Borreliaceae</taxon>
        <taxon>Borreliella</taxon>
    </lineage>
</organism>
<feature type="chain" id="PRO_0000307966" description="Large ribosomal subunit protein uL1">
    <location>
        <begin position="1"/>
        <end position="226"/>
    </location>
</feature>